<feature type="chain" id="PRO_0000324706" description="Truncated HBeAg protein">
    <location>
        <begin position="1"/>
        <end position="27"/>
    </location>
</feature>
<organismHost>
    <name type="scientific">Homo sapiens</name>
    <name type="common">Human</name>
    <dbReference type="NCBI Taxonomy" id="9606"/>
</organismHost>
<organismHost>
    <name type="scientific">Pan troglodytes</name>
    <name type="common">Chimpanzee</name>
    <dbReference type="NCBI Taxonomy" id="9598"/>
</organismHost>
<name>HBEAG_HBVB3</name>
<gene>
    <name type="primary">C</name>
</gene>
<sequence length="27" mass="3009">MQLFHLCLIISCSCPTVQASKLCLGWL</sequence>
<accession>P0C6G8</accession>
<comment type="alternative products">
    <event type="alternative initiation"/>
    <isoform>
        <id>P0C6G8-1</id>
        <name>External core antigen</name>
        <sequence type="displayed"/>
    </isoform>
    <isoform>
        <id>Q9QAB9-1</id>
        <name>Capsid protein</name>
        <sequence type="external"/>
    </isoform>
</comment>
<comment type="miscellaneous">
    <text>This virus has been isolated from a low active healthy carrier of HBV, negative for HBeAg. A genomic mutation in 1896 creates a stop codon at position 28 of HBeAg, without affecting capsid open reading frame. The HBeAg negative variants of HBV are associated with fulminant hepatitis, but can also be found in patients with persistent infection and chronic hepatitis.</text>
</comment>
<proteinExistence type="predicted"/>
<keyword id="KW-0024">Alternative initiation</keyword>
<organism>
    <name type="scientific">Hepatitis B virus genotype B2 (isolate Vietnam/9873/1997)</name>
    <name type="common">HBV-B</name>
    <dbReference type="NCBI Taxonomy" id="489461"/>
    <lineage>
        <taxon>Viruses</taxon>
        <taxon>Riboviria</taxon>
        <taxon>Pararnavirae</taxon>
        <taxon>Artverviricota</taxon>
        <taxon>Revtraviricetes</taxon>
        <taxon>Blubervirales</taxon>
        <taxon>Hepadnaviridae</taxon>
        <taxon>Orthohepadnavirus</taxon>
        <taxon>Hepatitis B virus</taxon>
    </lineage>
</organism>
<protein>
    <recommendedName>
        <fullName>Truncated HBeAg protein</fullName>
    </recommendedName>
</protein>
<dbReference type="EMBL" id="AF121251">
    <property type="status" value="NOT_ANNOTATED_CDS"/>
    <property type="molecule type" value="Genomic_DNA"/>
</dbReference>
<dbReference type="EMBL" id="AB298720">
    <property type="status" value="NOT_ANNOTATED_CDS"/>
    <property type="molecule type" value="Genomic_DNA"/>
</dbReference>
<dbReference type="EMBL" id="AB298721">
    <property type="status" value="NOT_ANNOTATED_CDS"/>
    <property type="molecule type" value="Genomic_DNA"/>
</dbReference>
<dbReference type="Proteomes" id="UP000007915">
    <property type="component" value="Genome"/>
</dbReference>
<dbReference type="Proteomes" id="UP000154547">
    <property type="component" value="Genome"/>
</dbReference>
<dbReference type="Proteomes" id="UP000159572">
    <property type="component" value="Genome"/>
</dbReference>
<dbReference type="GO" id="GO:0005198">
    <property type="term" value="F:structural molecule activity"/>
    <property type="evidence" value="ECO:0007669"/>
    <property type="project" value="InterPro"/>
</dbReference>
<dbReference type="InterPro" id="IPR013195">
    <property type="entry name" value="Hepatitis_B_virus_capsid_N"/>
</dbReference>
<dbReference type="Pfam" id="PF08290">
    <property type="entry name" value="Hep_core_N"/>
    <property type="match status" value="1"/>
</dbReference>
<reference key="1">
    <citation type="journal article" date="2000" name="J. Gen. Virol.">
        <title>Long-term mutation rates in the hepatitis B virus genome.</title>
        <authorList>
            <person name="Hannoun C."/>
            <person name="Horal P."/>
            <person name="Lindh M."/>
        </authorList>
    </citation>
    <scope>NUCLEOTIDE SEQUENCE [GENOMIC DNA]</scope>
</reference>
<reference key="2">
    <citation type="submission" date="2007-03" db="EMBL/GenBank/DDBJ databases">
        <title>Sequence analysis of hepatitis B virus in the cerebrospinal fluid of a patient with acute hepatitits B following acute onset of transverse myelitis.</title>
        <authorList>
            <person name="Inoue J."/>
            <person name="Ueno Y."/>
            <person name="Kogure T."/>
            <person name="Nagasaki F."/>
            <person name="Kimura O."/>
            <person name="Obara N."/>
            <person name="Kido O."/>
            <person name="Nakagome Y."/>
            <person name="Kakazu E."/>
            <person name="Matsuda Y."/>
            <person name="Fukushima K."/>
            <person name="Segawa H."/>
            <person name="Nakajima I."/>
            <person name="Itoyama Y."/>
            <person name="Takahashi M."/>
            <person name="Okamoto H."/>
            <person name="Shimosegawa T."/>
        </authorList>
    </citation>
    <scope>NUCLEOTIDE SEQUENCE [GENOMIC DNA]</scope>
    <source>
        <strain>Isolate BAJT2006-1C</strain>
        <strain>Isolate BAJT2006-1S</strain>
    </source>
</reference>